<evidence type="ECO:0000255" key="1">
    <source>
        <dbReference type="HAMAP-Rule" id="MF_01148"/>
    </source>
</evidence>
<gene>
    <name evidence="1" type="primary">lnt</name>
    <name type="ordered locus">Gmet_2367</name>
</gene>
<sequence length="521" mass="57386">MDYRRLRMPDFDAIPRRDYLMAVLSGVLLALSFPSPGISPLAWIAFAPLLLACGRKDPRKAFRLGFVTGLAAYAGILYWITIVVTTYGKLPWIVSVGVLSMLVSYLALYPAVVAYLVRRGEERGISLLISFPLLWVGLEYGRAFLVTGFPWASLGYTQYRTLPLIQIADITGVYGLSFLIALANVVLFRIIRGFAAREPAPYPVKSVVLLLVLLLVTIAYGFKRLHVPEGGAPFKVALIQGNIDQNIKWDPSFQEETVAIYERLSRKACAAGPSDLLVWPESAAPFYFQDEPRYASRIKGLARELKTCAVVGSPAFEKDGERLKYLNSAFLLSPWGDVIGRSDKIHLVPFGEYVPMAKLLPFVNKLVAGIGDFSPGAQIAALDTGKGRIGILVCFEGIFPELSRAYVRAGSRLLVNITNDAWFGRSSAPYQHISMTVFRAVENRVPLVRAANTGITSIIDSRGHIRGMTPLFQEAVLNGEVRLGEGESFYNRYGDVFAWACVAGAAVVAALAFRRKSIHHQ</sequence>
<dbReference type="EC" id="2.3.1.269" evidence="1"/>
<dbReference type="EMBL" id="CP000148">
    <property type="protein sequence ID" value="ABB32592.1"/>
    <property type="molecule type" value="Genomic_DNA"/>
</dbReference>
<dbReference type="RefSeq" id="WP_004513253.1">
    <property type="nucleotide sequence ID" value="NC_007517.1"/>
</dbReference>
<dbReference type="SMR" id="Q39T32"/>
<dbReference type="STRING" id="269799.Gmet_2367"/>
<dbReference type="KEGG" id="gme:Gmet_2367"/>
<dbReference type="eggNOG" id="COG0815">
    <property type="taxonomic scope" value="Bacteria"/>
</dbReference>
<dbReference type="HOGENOM" id="CLU_019563_1_2_7"/>
<dbReference type="UniPathway" id="UPA00666"/>
<dbReference type="Proteomes" id="UP000007073">
    <property type="component" value="Chromosome"/>
</dbReference>
<dbReference type="GO" id="GO:0005886">
    <property type="term" value="C:plasma membrane"/>
    <property type="evidence" value="ECO:0007669"/>
    <property type="project" value="UniProtKB-SubCell"/>
</dbReference>
<dbReference type="GO" id="GO:0016410">
    <property type="term" value="F:N-acyltransferase activity"/>
    <property type="evidence" value="ECO:0007669"/>
    <property type="project" value="UniProtKB-UniRule"/>
</dbReference>
<dbReference type="GO" id="GO:0042158">
    <property type="term" value="P:lipoprotein biosynthetic process"/>
    <property type="evidence" value="ECO:0007669"/>
    <property type="project" value="UniProtKB-UniRule"/>
</dbReference>
<dbReference type="CDD" id="cd07571">
    <property type="entry name" value="ALP_N-acyl_transferase"/>
    <property type="match status" value="1"/>
</dbReference>
<dbReference type="Gene3D" id="3.60.110.10">
    <property type="entry name" value="Carbon-nitrogen hydrolase"/>
    <property type="match status" value="1"/>
</dbReference>
<dbReference type="HAMAP" id="MF_01148">
    <property type="entry name" value="Lnt"/>
    <property type="match status" value="1"/>
</dbReference>
<dbReference type="InterPro" id="IPR004563">
    <property type="entry name" value="Apolipo_AcylTrfase"/>
</dbReference>
<dbReference type="InterPro" id="IPR003010">
    <property type="entry name" value="C-N_Hydrolase"/>
</dbReference>
<dbReference type="InterPro" id="IPR036526">
    <property type="entry name" value="C-N_Hydrolase_sf"/>
</dbReference>
<dbReference type="InterPro" id="IPR045378">
    <property type="entry name" value="LNT_N"/>
</dbReference>
<dbReference type="NCBIfam" id="TIGR00546">
    <property type="entry name" value="lnt"/>
    <property type="match status" value="1"/>
</dbReference>
<dbReference type="PANTHER" id="PTHR38686">
    <property type="entry name" value="APOLIPOPROTEIN N-ACYLTRANSFERASE"/>
    <property type="match status" value="1"/>
</dbReference>
<dbReference type="PANTHER" id="PTHR38686:SF1">
    <property type="entry name" value="APOLIPOPROTEIN N-ACYLTRANSFERASE"/>
    <property type="match status" value="1"/>
</dbReference>
<dbReference type="Pfam" id="PF00795">
    <property type="entry name" value="CN_hydrolase"/>
    <property type="match status" value="1"/>
</dbReference>
<dbReference type="Pfam" id="PF20154">
    <property type="entry name" value="LNT_N"/>
    <property type="match status" value="1"/>
</dbReference>
<dbReference type="SUPFAM" id="SSF56317">
    <property type="entry name" value="Carbon-nitrogen hydrolase"/>
    <property type="match status" value="1"/>
</dbReference>
<dbReference type="PROSITE" id="PS50263">
    <property type="entry name" value="CN_HYDROLASE"/>
    <property type="match status" value="1"/>
</dbReference>
<name>LNT_GEOMG</name>
<organism>
    <name type="scientific">Geobacter metallireducens (strain ATCC 53774 / DSM 7210 / GS-15)</name>
    <dbReference type="NCBI Taxonomy" id="269799"/>
    <lineage>
        <taxon>Bacteria</taxon>
        <taxon>Pseudomonadati</taxon>
        <taxon>Thermodesulfobacteriota</taxon>
        <taxon>Desulfuromonadia</taxon>
        <taxon>Geobacterales</taxon>
        <taxon>Geobacteraceae</taxon>
        <taxon>Geobacter</taxon>
    </lineage>
</organism>
<keyword id="KW-0012">Acyltransferase</keyword>
<keyword id="KW-0997">Cell inner membrane</keyword>
<keyword id="KW-1003">Cell membrane</keyword>
<keyword id="KW-0472">Membrane</keyword>
<keyword id="KW-1185">Reference proteome</keyword>
<keyword id="KW-0808">Transferase</keyword>
<keyword id="KW-0812">Transmembrane</keyword>
<keyword id="KW-1133">Transmembrane helix</keyword>
<reference key="1">
    <citation type="journal article" date="2009" name="BMC Microbiol.">
        <title>The genome sequence of Geobacter metallireducens: features of metabolism, physiology and regulation common and dissimilar to Geobacter sulfurreducens.</title>
        <authorList>
            <person name="Aklujkar M."/>
            <person name="Krushkal J."/>
            <person name="DiBartolo G."/>
            <person name="Lapidus A."/>
            <person name="Land M.L."/>
            <person name="Lovley D.R."/>
        </authorList>
    </citation>
    <scope>NUCLEOTIDE SEQUENCE [LARGE SCALE GENOMIC DNA]</scope>
    <source>
        <strain>ATCC 53774 / DSM 7210 / GS-15</strain>
    </source>
</reference>
<proteinExistence type="inferred from homology"/>
<comment type="function">
    <text evidence="1">Catalyzes the phospholipid dependent N-acylation of the N-terminal cysteine of apolipoprotein, the last step in lipoprotein maturation.</text>
</comment>
<comment type="catalytic activity">
    <reaction evidence="1">
        <text>N-terminal S-1,2-diacyl-sn-glyceryl-L-cysteinyl-[lipoprotein] + a glycerophospholipid = N-acyl-S-1,2-diacyl-sn-glyceryl-L-cysteinyl-[lipoprotein] + a 2-acyl-sn-glycero-3-phospholipid + H(+)</text>
        <dbReference type="Rhea" id="RHEA:48228"/>
        <dbReference type="Rhea" id="RHEA-COMP:14681"/>
        <dbReference type="Rhea" id="RHEA-COMP:14684"/>
        <dbReference type="ChEBI" id="CHEBI:15378"/>
        <dbReference type="ChEBI" id="CHEBI:136912"/>
        <dbReference type="ChEBI" id="CHEBI:140656"/>
        <dbReference type="ChEBI" id="CHEBI:140657"/>
        <dbReference type="ChEBI" id="CHEBI:140660"/>
        <dbReference type="EC" id="2.3.1.269"/>
    </reaction>
</comment>
<comment type="pathway">
    <text evidence="1">Protein modification; lipoprotein biosynthesis (N-acyl transfer).</text>
</comment>
<comment type="subcellular location">
    <subcellularLocation>
        <location evidence="1">Cell inner membrane</location>
        <topology evidence="1">Multi-pass membrane protein</topology>
    </subcellularLocation>
</comment>
<comment type="similarity">
    <text evidence="1">Belongs to the CN hydrolase family. Apolipoprotein N-acyltransferase subfamily.</text>
</comment>
<feature type="chain" id="PRO_1000164161" description="Apolipoprotein N-acyltransferase">
    <location>
        <begin position="1"/>
        <end position="521"/>
    </location>
</feature>
<feature type="transmembrane region" description="Helical" evidence="1">
    <location>
        <begin position="27"/>
        <end position="47"/>
    </location>
</feature>
<feature type="transmembrane region" description="Helical" evidence="1">
    <location>
        <begin position="64"/>
        <end position="84"/>
    </location>
</feature>
<feature type="transmembrane region" description="Helical" evidence="1">
    <location>
        <begin position="93"/>
        <end position="113"/>
    </location>
</feature>
<feature type="transmembrane region" description="Helical" evidence="1">
    <location>
        <begin position="125"/>
        <end position="145"/>
    </location>
</feature>
<feature type="transmembrane region" description="Helical" evidence="1">
    <location>
        <begin position="167"/>
        <end position="187"/>
    </location>
</feature>
<feature type="transmembrane region" description="Helical" evidence="1">
    <location>
        <begin position="202"/>
        <end position="222"/>
    </location>
</feature>
<feature type="transmembrane region" description="Helical" evidence="1">
    <location>
        <begin position="493"/>
        <end position="513"/>
    </location>
</feature>
<feature type="domain" description="CN hydrolase" evidence="1">
    <location>
        <begin position="239"/>
        <end position="483"/>
    </location>
</feature>
<feature type="active site" description="Proton acceptor" evidence="1">
    <location>
        <position position="281"/>
    </location>
</feature>
<feature type="active site" evidence="1">
    <location>
        <position position="344"/>
    </location>
</feature>
<feature type="active site" description="Nucleophile" evidence="1">
    <location>
        <position position="394"/>
    </location>
</feature>
<accession>Q39T32</accession>
<protein>
    <recommendedName>
        <fullName evidence="1">Apolipoprotein N-acyltransferase</fullName>
        <shortName evidence="1">ALP N-acyltransferase</shortName>
        <ecNumber evidence="1">2.3.1.269</ecNumber>
    </recommendedName>
</protein>